<comment type="function">
    <text evidence="1">Protein S19 forms a complex with S13 that binds strongly to the 16S ribosomal RNA.</text>
</comment>
<comment type="similarity">
    <text evidence="1">Belongs to the universal ribosomal protein uS19 family.</text>
</comment>
<accession>Q81VS6</accession>
<accession>Q6I4T0</accession>
<accession>Q6KYH6</accession>
<keyword id="KW-1185">Reference proteome</keyword>
<keyword id="KW-0687">Ribonucleoprotein</keyword>
<keyword id="KW-0689">Ribosomal protein</keyword>
<keyword id="KW-0694">RNA-binding</keyword>
<keyword id="KW-0699">rRNA-binding</keyword>
<sequence>MARSLKKGPFVDDHLMSKIAKLNETEQKQVVKTWSRRSTIFPQFIGHTIAVYDGRKHVPVYVTEDMVGHKLGEFAPTRTYKGHDADDKKTRR</sequence>
<name>RS19_BACAN</name>
<gene>
    <name evidence="1" type="primary">rpsS</name>
    <name type="ordered locus">BA_0114</name>
    <name type="ordered locus">GBAA_0114</name>
    <name type="ordered locus">BAS0114</name>
</gene>
<reference key="1">
    <citation type="journal article" date="2003" name="Nature">
        <title>The genome sequence of Bacillus anthracis Ames and comparison to closely related bacteria.</title>
        <authorList>
            <person name="Read T.D."/>
            <person name="Peterson S.N."/>
            <person name="Tourasse N.J."/>
            <person name="Baillie L.W."/>
            <person name="Paulsen I.T."/>
            <person name="Nelson K.E."/>
            <person name="Tettelin H."/>
            <person name="Fouts D.E."/>
            <person name="Eisen J.A."/>
            <person name="Gill S.R."/>
            <person name="Holtzapple E.K."/>
            <person name="Okstad O.A."/>
            <person name="Helgason E."/>
            <person name="Rilstone J."/>
            <person name="Wu M."/>
            <person name="Kolonay J.F."/>
            <person name="Beanan M.J."/>
            <person name="Dodson R.J."/>
            <person name="Brinkac L.M."/>
            <person name="Gwinn M.L."/>
            <person name="DeBoy R.T."/>
            <person name="Madpu R."/>
            <person name="Daugherty S.C."/>
            <person name="Durkin A.S."/>
            <person name="Haft D.H."/>
            <person name="Nelson W.C."/>
            <person name="Peterson J.D."/>
            <person name="Pop M."/>
            <person name="Khouri H.M."/>
            <person name="Radune D."/>
            <person name="Benton J.L."/>
            <person name="Mahamoud Y."/>
            <person name="Jiang L."/>
            <person name="Hance I.R."/>
            <person name="Weidman J.F."/>
            <person name="Berry K.J."/>
            <person name="Plaut R.D."/>
            <person name="Wolf A.M."/>
            <person name="Watkins K.L."/>
            <person name="Nierman W.C."/>
            <person name="Hazen A."/>
            <person name="Cline R.T."/>
            <person name="Redmond C."/>
            <person name="Thwaite J.E."/>
            <person name="White O."/>
            <person name="Salzberg S.L."/>
            <person name="Thomason B."/>
            <person name="Friedlander A.M."/>
            <person name="Koehler T.M."/>
            <person name="Hanna P.C."/>
            <person name="Kolstoe A.-B."/>
            <person name="Fraser C.M."/>
        </authorList>
    </citation>
    <scope>NUCLEOTIDE SEQUENCE [LARGE SCALE GENOMIC DNA]</scope>
    <source>
        <strain>Ames / isolate Porton</strain>
    </source>
</reference>
<reference key="2">
    <citation type="journal article" date="2009" name="J. Bacteriol.">
        <title>The complete genome sequence of Bacillus anthracis Ames 'Ancestor'.</title>
        <authorList>
            <person name="Ravel J."/>
            <person name="Jiang L."/>
            <person name="Stanley S.T."/>
            <person name="Wilson M.R."/>
            <person name="Decker R.S."/>
            <person name="Read T.D."/>
            <person name="Worsham P."/>
            <person name="Keim P.S."/>
            <person name="Salzberg S.L."/>
            <person name="Fraser-Liggett C.M."/>
            <person name="Rasko D.A."/>
        </authorList>
    </citation>
    <scope>NUCLEOTIDE SEQUENCE [LARGE SCALE GENOMIC DNA]</scope>
    <source>
        <strain>Ames ancestor</strain>
    </source>
</reference>
<reference key="3">
    <citation type="submission" date="2004-01" db="EMBL/GenBank/DDBJ databases">
        <title>Complete genome sequence of Bacillus anthracis Sterne.</title>
        <authorList>
            <person name="Brettin T.S."/>
            <person name="Bruce D."/>
            <person name="Challacombe J.F."/>
            <person name="Gilna P."/>
            <person name="Han C."/>
            <person name="Hill K."/>
            <person name="Hitchcock P."/>
            <person name="Jackson P."/>
            <person name="Keim P."/>
            <person name="Longmire J."/>
            <person name="Lucas S."/>
            <person name="Okinaka R."/>
            <person name="Richardson P."/>
            <person name="Rubin E."/>
            <person name="Tice H."/>
        </authorList>
    </citation>
    <scope>NUCLEOTIDE SEQUENCE [LARGE SCALE GENOMIC DNA]</scope>
    <source>
        <strain>Sterne</strain>
    </source>
</reference>
<protein>
    <recommendedName>
        <fullName evidence="1">Small ribosomal subunit protein uS19</fullName>
    </recommendedName>
    <alternativeName>
        <fullName evidence="2">30S ribosomal protein S19</fullName>
    </alternativeName>
</protein>
<evidence type="ECO:0000255" key="1">
    <source>
        <dbReference type="HAMAP-Rule" id="MF_00531"/>
    </source>
</evidence>
<evidence type="ECO:0000305" key="2"/>
<proteinExistence type="inferred from homology"/>
<feature type="chain" id="PRO_0000129771" description="Small ribosomal subunit protein uS19">
    <location>
        <begin position="1"/>
        <end position="92"/>
    </location>
</feature>
<dbReference type="EMBL" id="AE016879">
    <property type="protein sequence ID" value="AAP24168.1"/>
    <property type="molecule type" value="Genomic_DNA"/>
</dbReference>
<dbReference type="EMBL" id="AE017334">
    <property type="protein sequence ID" value="AAT29194.1"/>
    <property type="molecule type" value="Genomic_DNA"/>
</dbReference>
<dbReference type="EMBL" id="AE017225">
    <property type="protein sequence ID" value="AAT52451.1"/>
    <property type="molecule type" value="Genomic_DNA"/>
</dbReference>
<dbReference type="RefSeq" id="NP_842682.1">
    <property type="nucleotide sequence ID" value="NC_003997.3"/>
</dbReference>
<dbReference type="RefSeq" id="WP_000124453.1">
    <property type="nucleotide sequence ID" value="NZ_WXXJ01000051.1"/>
</dbReference>
<dbReference type="RefSeq" id="YP_026400.1">
    <property type="nucleotide sequence ID" value="NC_005945.1"/>
</dbReference>
<dbReference type="SMR" id="Q81VS6"/>
<dbReference type="STRING" id="261594.GBAA_0114"/>
<dbReference type="DNASU" id="1084693"/>
<dbReference type="GeneID" id="93010939"/>
<dbReference type="KEGG" id="ban:BA_0114"/>
<dbReference type="KEGG" id="bar:GBAA_0114"/>
<dbReference type="KEGG" id="bat:BAS0114"/>
<dbReference type="PATRIC" id="fig|198094.11.peg.111"/>
<dbReference type="eggNOG" id="COG0185">
    <property type="taxonomic scope" value="Bacteria"/>
</dbReference>
<dbReference type="HOGENOM" id="CLU_144911_0_1_9"/>
<dbReference type="OMA" id="KGPFVDP"/>
<dbReference type="OrthoDB" id="9797833at2"/>
<dbReference type="Proteomes" id="UP000000427">
    <property type="component" value="Chromosome"/>
</dbReference>
<dbReference type="Proteomes" id="UP000000594">
    <property type="component" value="Chromosome"/>
</dbReference>
<dbReference type="GO" id="GO:0005737">
    <property type="term" value="C:cytoplasm"/>
    <property type="evidence" value="ECO:0007669"/>
    <property type="project" value="UniProtKB-ARBA"/>
</dbReference>
<dbReference type="GO" id="GO:0015935">
    <property type="term" value="C:small ribosomal subunit"/>
    <property type="evidence" value="ECO:0007669"/>
    <property type="project" value="InterPro"/>
</dbReference>
<dbReference type="GO" id="GO:0019843">
    <property type="term" value="F:rRNA binding"/>
    <property type="evidence" value="ECO:0007669"/>
    <property type="project" value="UniProtKB-UniRule"/>
</dbReference>
<dbReference type="GO" id="GO:0003735">
    <property type="term" value="F:structural constituent of ribosome"/>
    <property type="evidence" value="ECO:0007669"/>
    <property type="project" value="InterPro"/>
</dbReference>
<dbReference type="GO" id="GO:0000028">
    <property type="term" value="P:ribosomal small subunit assembly"/>
    <property type="evidence" value="ECO:0007669"/>
    <property type="project" value="TreeGrafter"/>
</dbReference>
<dbReference type="GO" id="GO:0006412">
    <property type="term" value="P:translation"/>
    <property type="evidence" value="ECO:0007669"/>
    <property type="project" value="UniProtKB-UniRule"/>
</dbReference>
<dbReference type="FunFam" id="3.30.860.10:FF:000001">
    <property type="entry name" value="30S ribosomal protein S19"/>
    <property type="match status" value="1"/>
</dbReference>
<dbReference type="Gene3D" id="3.30.860.10">
    <property type="entry name" value="30s Ribosomal Protein S19, Chain A"/>
    <property type="match status" value="1"/>
</dbReference>
<dbReference type="HAMAP" id="MF_00531">
    <property type="entry name" value="Ribosomal_uS19"/>
    <property type="match status" value="1"/>
</dbReference>
<dbReference type="InterPro" id="IPR002222">
    <property type="entry name" value="Ribosomal_uS19"/>
</dbReference>
<dbReference type="InterPro" id="IPR005732">
    <property type="entry name" value="Ribosomal_uS19_bac-type"/>
</dbReference>
<dbReference type="InterPro" id="IPR020934">
    <property type="entry name" value="Ribosomal_uS19_CS"/>
</dbReference>
<dbReference type="InterPro" id="IPR023575">
    <property type="entry name" value="Ribosomal_uS19_SF"/>
</dbReference>
<dbReference type="NCBIfam" id="TIGR01050">
    <property type="entry name" value="rpsS_bact"/>
    <property type="match status" value="1"/>
</dbReference>
<dbReference type="PANTHER" id="PTHR11880">
    <property type="entry name" value="RIBOSOMAL PROTEIN S19P FAMILY MEMBER"/>
    <property type="match status" value="1"/>
</dbReference>
<dbReference type="PANTHER" id="PTHR11880:SF8">
    <property type="entry name" value="SMALL RIBOSOMAL SUBUNIT PROTEIN US19M"/>
    <property type="match status" value="1"/>
</dbReference>
<dbReference type="Pfam" id="PF00203">
    <property type="entry name" value="Ribosomal_S19"/>
    <property type="match status" value="1"/>
</dbReference>
<dbReference type="PIRSF" id="PIRSF002144">
    <property type="entry name" value="Ribosomal_S19"/>
    <property type="match status" value="1"/>
</dbReference>
<dbReference type="PRINTS" id="PR00975">
    <property type="entry name" value="RIBOSOMALS19"/>
</dbReference>
<dbReference type="SUPFAM" id="SSF54570">
    <property type="entry name" value="Ribosomal protein S19"/>
    <property type="match status" value="1"/>
</dbReference>
<dbReference type="PROSITE" id="PS00323">
    <property type="entry name" value="RIBOSOMAL_S19"/>
    <property type="match status" value="1"/>
</dbReference>
<organism>
    <name type="scientific">Bacillus anthracis</name>
    <dbReference type="NCBI Taxonomy" id="1392"/>
    <lineage>
        <taxon>Bacteria</taxon>
        <taxon>Bacillati</taxon>
        <taxon>Bacillota</taxon>
        <taxon>Bacilli</taxon>
        <taxon>Bacillales</taxon>
        <taxon>Bacillaceae</taxon>
        <taxon>Bacillus</taxon>
        <taxon>Bacillus cereus group</taxon>
    </lineage>
</organism>